<accession>Q1MKX4</accession>
<gene>
    <name evidence="1" type="primary">groEL1</name>
    <name evidence="1" type="synonym">groL1</name>
    <name type="ordered locus">RL0883</name>
</gene>
<comment type="function">
    <text evidence="1">Together with its co-chaperonin GroES, plays an essential role in assisting protein folding. The GroEL-GroES system forms a nano-cage that allows encapsulation of the non-native substrate proteins and provides a physical environment optimized to promote and accelerate protein folding.</text>
</comment>
<comment type="catalytic activity">
    <reaction evidence="1">
        <text>ATP + H2O + a folded polypeptide = ADP + phosphate + an unfolded polypeptide.</text>
        <dbReference type="EC" id="5.6.1.7"/>
    </reaction>
</comment>
<comment type="subunit">
    <text evidence="1">Forms a cylinder of 14 subunits composed of two heptameric rings stacked back-to-back. Interacts with the co-chaperonin GroES.</text>
</comment>
<comment type="subcellular location">
    <subcellularLocation>
        <location evidence="1">Cytoplasm</location>
    </subcellularLocation>
</comment>
<comment type="similarity">
    <text evidence="1">Belongs to the chaperonin (HSP60) family.</text>
</comment>
<organism>
    <name type="scientific">Rhizobium johnstonii (strain DSM 114642 / LMG 32736 / 3841)</name>
    <name type="common">Rhizobium leguminosarum bv. viciae</name>
    <dbReference type="NCBI Taxonomy" id="216596"/>
    <lineage>
        <taxon>Bacteria</taxon>
        <taxon>Pseudomonadati</taxon>
        <taxon>Pseudomonadota</taxon>
        <taxon>Alphaproteobacteria</taxon>
        <taxon>Hyphomicrobiales</taxon>
        <taxon>Rhizobiaceae</taxon>
        <taxon>Rhizobium/Agrobacterium group</taxon>
        <taxon>Rhizobium</taxon>
        <taxon>Rhizobium johnstonii</taxon>
    </lineage>
</organism>
<feature type="chain" id="PRO_0000256961" description="Chaperonin GroEL 1">
    <location>
        <begin position="1"/>
        <end position="547"/>
    </location>
</feature>
<feature type="binding site" evidence="1">
    <location>
        <begin position="30"/>
        <end position="33"/>
    </location>
    <ligand>
        <name>ATP</name>
        <dbReference type="ChEBI" id="CHEBI:30616"/>
    </ligand>
</feature>
<feature type="binding site" evidence="1">
    <location>
        <position position="51"/>
    </location>
    <ligand>
        <name>ATP</name>
        <dbReference type="ChEBI" id="CHEBI:30616"/>
    </ligand>
</feature>
<feature type="binding site" evidence="1">
    <location>
        <begin position="87"/>
        <end position="91"/>
    </location>
    <ligand>
        <name>ATP</name>
        <dbReference type="ChEBI" id="CHEBI:30616"/>
    </ligand>
</feature>
<feature type="binding site" evidence="1">
    <location>
        <position position="415"/>
    </location>
    <ligand>
        <name>ATP</name>
        <dbReference type="ChEBI" id="CHEBI:30616"/>
    </ligand>
</feature>
<feature type="binding site" evidence="1">
    <location>
        <position position="495"/>
    </location>
    <ligand>
        <name>ATP</name>
        <dbReference type="ChEBI" id="CHEBI:30616"/>
    </ligand>
</feature>
<sequence length="547" mass="57902">MASKEIKFGRTAREKMLRGVDILADAVKVTLGPKGRNVIIDKSFGAPRITKDGVSVAKEIELEDKFENMGAQMVREVASKTNDIAGDGTTTATVLAQAIVREGNKAVAAGMNPMDLKRGIDLAVADVVKDLQAKAKKISTSEEVAQVGTISANGDKQVGLDIAEAMQKVGNEGVITVEEAKTAETELEVVEGMQFDRGYLSPYFVTNPEKMIADLEDVFILLHEKKLSNLQSMLPVLEAVVQTGKPLLIVAEDVEGEALATLVVNKLRGGLKIAAVKAPGFGDRRKAMLEDIAILTGGTVISEDLGIKLESVTLDMLGRAKKVSISKENTTIVDGSGAKTDIEGRVAQIKAQIEETTSDYDREKLQERLAKLAGGVAVIRVGGSTEVEVKEKKDRIDDALNATRAAVQEGIVPGGGIALLRSSTKITVKGANDDQEAGINIVRRALQSLVRQIAENAGDEASIVVGKVLDKNEDNFGYNAQTSEYGDMIAMGIVDPLKVVRTALQNAASVASLLITTEAMIAELPKKESAGGGMPGGMGGMGGMDMM</sequence>
<dbReference type="EC" id="5.6.1.7" evidence="1"/>
<dbReference type="EMBL" id="AM236080">
    <property type="protein sequence ID" value="CAK06380.1"/>
    <property type="molecule type" value="Genomic_DNA"/>
</dbReference>
<dbReference type="SMR" id="Q1MKX4"/>
<dbReference type="EnsemblBacteria" id="CAK06380">
    <property type="protein sequence ID" value="CAK06380"/>
    <property type="gene ID" value="RL0883"/>
</dbReference>
<dbReference type="KEGG" id="rle:RL0883"/>
<dbReference type="eggNOG" id="COG0459">
    <property type="taxonomic scope" value="Bacteria"/>
</dbReference>
<dbReference type="HOGENOM" id="CLU_016503_3_0_5"/>
<dbReference type="Proteomes" id="UP000006575">
    <property type="component" value="Chromosome"/>
</dbReference>
<dbReference type="GO" id="GO:0005737">
    <property type="term" value="C:cytoplasm"/>
    <property type="evidence" value="ECO:0007669"/>
    <property type="project" value="UniProtKB-SubCell"/>
</dbReference>
<dbReference type="GO" id="GO:0005524">
    <property type="term" value="F:ATP binding"/>
    <property type="evidence" value="ECO:0007669"/>
    <property type="project" value="UniProtKB-UniRule"/>
</dbReference>
<dbReference type="GO" id="GO:0140662">
    <property type="term" value="F:ATP-dependent protein folding chaperone"/>
    <property type="evidence" value="ECO:0007669"/>
    <property type="project" value="InterPro"/>
</dbReference>
<dbReference type="GO" id="GO:0016853">
    <property type="term" value="F:isomerase activity"/>
    <property type="evidence" value="ECO:0007669"/>
    <property type="project" value="UniProtKB-KW"/>
</dbReference>
<dbReference type="GO" id="GO:0051082">
    <property type="term" value="F:unfolded protein binding"/>
    <property type="evidence" value="ECO:0007669"/>
    <property type="project" value="UniProtKB-UniRule"/>
</dbReference>
<dbReference type="GO" id="GO:0042026">
    <property type="term" value="P:protein refolding"/>
    <property type="evidence" value="ECO:0007669"/>
    <property type="project" value="UniProtKB-UniRule"/>
</dbReference>
<dbReference type="CDD" id="cd03344">
    <property type="entry name" value="GroEL"/>
    <property type="match status" value="1"/>
</dbReference>
<dbReference type="FunFam" id="1.10.560.10:FF:000001">
    <property type="entry name" value="60 kDa chaperonin"/>
    <property type="match status" value="1"/>
</dbReference>
<dbReference type="FunFam" id="3.50.7.10:FF:000001">
    <property type="entry name" value="60 kDa chaperonin"/>
    <property type="match status" value="1"/>
</dbReference>
<dbReference type="Gene3D" id="3.50.7.10">
    <property type="entry name" value="GroEL"/>
    <property type="match status" value="1"/>
</dbReference>
<dbReference type="Gene3D" id="1.10.560.10">
    <property type="entry name" value="GroEL-like equatorial domain"/>
    <property type="match status" value="1"/>
</dbReference>
<dbReference type="Gene3D" id="3.30.260.10">
    <property type="entry name" value="TCP-1-like chaperonin intermediate domain"/>
    <property type="match status" value="1"/>
</dbReference>
<dbReference type="HAMAP" id="MF_00600">
    <property type="entry name" value="CH60"/>
    <property type="match status" value="1"/>
</dbReference>
<dbReference type="InterPro" id="IPR018370">
    <property type="entry name" value="Chaperonin_Cpn60_CS"/>
</dbReference>
<dbReference type="InterPro" id="IPR001844">
    <property type="entry name" value="Cpn60/GroEL"/>
</dbReference>
<dbReference type="InterPro" id="IPR002423">
    <property type="entry name" value="Cpn60/GroEL/TCP-1"/>
</dbReference>
<dbReference type="InterPro" id="IPR027409">
    <property type="entry name" value="GroEL-like_apical_dom_sf"/>
</dbReference>
<dbReference type="InterPro" id="IPR027413">
    <property type="entry name" value="GROEL-like_equatorial_sf"/>
</dbReference>
<dbReference type="InterPro" id="IPR027410">
    <property type="entry name" value="TCP-1-like_intermed_sf"/>
</dbReference>
<dbReference type="NCBIfam" id="TIGR02348">
    <property type="entry name" value="GroEL"/>
    <property type="match status" value="1"/>
</dbReference>
<dbReference type="NCBIfam" id="NF000592">
    <property type="entry name" value="PRK00013.1"/>
    <property type="match status" value="1"/>
</dbReference>
<dbReference type="NCBIfam" id="NF009487">
    <property type="entry name" value="PRK12849.1"/>
    <property type="match status" value="1"/>
</dbReference>
<dbReference type="NCBIfam" id="NF009488">
    <property type="entry name" value="PRK12850.1"/>
    <property type="match status" value="1"/>
</dbReference>
<dbReference type="NCBIfam" id="NF009489">
    <property type="entry name" value="PRK12851.1"/>
    <property type="match status" value="1"/>
</dbReference>
<dbReference type="PANTHER" id="PTHR45633">
    <property type="entry name" value="60 KDA HEAT SHOCK PROTEIN, MITOCHONDRIAL"/>
    <property type="match status" value="1"/>
</dbReference>
<dbReference type="Pfam" id="PF00118">
    <property type="entry name" value="Cpn60_TCP1"/>
    <property type="match status" value="1"/>
</dbReference>
<dbReference type="PRINTS" id="PR00298">
    <property type="entry name" value="CHAPERONIN60"/>
</dbReference>
<dbReference type="SUPFAM" id="SSF52029">
    <property type="entry name" value="GroEL apical domain-like"/>
    <property type="match status" value="1"/>
</dbReference>
<dbReference type="SUPFAM" id="SSF48592">
    <property type="entry name" value="GroEL equatorial domain-like"/>
    <property type="match status" value="1"/>
</dbReference>
<dbReference type="SUPFAM" id="SSF54849">
    <property type="entry name" value="GroEL-intermediate domain like"/>
    <property type="match status" value="1"/>
</dbReference>
<dbReference type="PROSITE" id="PS00296">
    <property type="entry name" value="CHAPERONINS_CPN60"/>
    <property type="match status" value="1"/>
</dbReference>
<reference key="1">
    <citation type="journal article" date="2006" name="Genome Biol.">
        <title>The genome of Rhizobium leguminosarum has recognizable core and accessory components.</title>
        <authorList>
            <person name="Young J.P.W."/>
            <person name="Crossman L.C."/>
            <person name="Johnston A.W.B."/>
            <person name="Thomson N.R."/>
            <person name="Ghazoui Z.F."/>
            <person name="Hull K.H."/>
            <person name="Wexler M."/>
            <person name="Curson A.R.J."/>
            <person name="Todd J.D."/>
            <person name="Poole P.S."/>
            <person name="Mauchline T.H."/>
            <person name="East A.K."/>
            <person name="Quail M.A."/>
            <person name="Churcher C."/>
            <person name="Arrowsmith C."/>
            <person name="Cherevach I."/>
            <person name="Chillingworth T."/>
            <person name="Clarke K."/>
            <person name="Cronin A."/>
            <person name="Davis P."/>
            <person name="Fraser A."/>
            <person name="Hance Z."/>
            <person name="Hauser H."/>
            <person name="Jagels K."/>
            <person name="Moule S."/>
            <person name="Mungall K."/>
            <person name="Norbertczak H."/>
            <person name="Rabbinowitsch E."/>
            <person name="Sanders M."/>
            <person name="Simmonds M."/>
            <person name="Whitehead S."/>
            <person name="Parkhill J."/>
        </authorList>
    </citation>
    <scope>NUCLEOTIDE SEQUENCE [LARGE SCALE GENOMIC DNA]</scope>
    <source>
        <strain>DSM 114642 / LMG 32736 / 3841</strain>
    </source>
</reference>
<evidence type="ECO:0000255" key="1">
    <source>
        <dbReference type="HAMAP-Rule" id="MF_00600"/>
    </source>
</evidence>
<protein>
    <recommendedName>
        <fullName evidence="1">Chaperonin GroEL 1</fullName>
        <ecNumber evidence="1">5.6.1.7</ecNumber>
    </recommendedName>
    <alternativeName>
        <fullName evidence="1">60 kDa chaperonin 1</fullName>
    </alternativeName>
    <alternativeName>
        <fullName evidence="1">Chaperonin-60 1</fullName>
        <shortName evidence="1">Cpn60 1</shortName>
    </alternativeName>
</protein>
<keyword id="KW-0067">ATP-binding</keyword>
<keyword id="KW-0143">Chaperone</keyword>
<keyword id="KW-0963">Cytoplasm</keyword>
<keyword id="KW-0413">Isomerase</keyword>
<keyword id="KW-0547">Nucleotide-binding</keyword>
<proteinExistence type="inferred from homology"/>
<name>CH601_RHIJ3</name>